<gene>
    <name type="primary">gag-pol</name>
</gene>
<proteinExistence type="inferred from homology"/>
<sequence length="1907" mass="214248">MVWGTGYGNPSPLNPYGFASLHRGGLNPLILAPENITFDTLNTHNDHEETHGESPEVPKASIAPAGRQNVPVLQQNQENEDNHALGGSEDAKDEREIRFSAIKTLYNYYSEGPSTPIMPHLVNRLRGLDALAKIDATLTKVDMNAAYIFALRPTFPYSYGYKQRFSNRRLTTSALCYARTGLSSFLTVDKTYTSNSPLKGGSRGWPIFNVDVSSHVAEPHMRTLSPIGLEVFNLATSQFSKTLLTASSKVFTQSLYTADILSIFGEVFLPHVMQPVSNYTPILVRALLALIHILGPGSGNCSLSSSIFESSIPQFLTVSHSTNMSNRTRYCLHTRSAYKDMFRNGIPPQSTLPPTLAPEGSSARVLIPEALVTSPMFPWLLILVSSGPQFFLYSKDASINTVDIGSRGRITSPIPDVAKLDLHRLWNLFRFDGYRYIDVVIVGADRDYVWPYQNGVYVHGGKGPNGTGNYGNADVHDGIGTIFSSFNNNVNVQTSDLMLGLLTLWNHITTTYATEEEVTMAIKIAAAFALVYPVQPIVYSGCPKAFQRHTSYYQPSSENCYATDTAEVKSVWDTVELSVQVNNAMVLGMTLPFGQPTLSSAQWYNNIDKAEISMFKVGNLPLQNLDYLSLDMMEFYAPTTGQLYDIRSDNLILSAHRTVNLGIGYTALADFFAYLASVPAQSFYHDRMVTSPISKQTYSVYERFIERFIDDFVGWDRCDLFNLDTLLGAKHIAGVASSPIPWHCSLQRCPLPIIMHYTGLTFGQEHITVRDVAGVEGLQQIVMRDFQGRIVVERLGTAAPSRIAVKLDWSRLSAWYSDTTCAIPLIRSCDGDRQLRGNMGSYTGKTRTGFVYTYFSPNFLSSFNVSEPIFNTSINLTPPYDDTSQAVIQNLSMPQMLSFDPYYESTFYVVSADNEWIPTSGPAWKVPYLENVVKRSGRRLLAELRIASNNGSGDRTFLTTCKTRKGRHFTYFSAALGGKILEFVCAPLSSISLQGGQTIYAPIQLQDVIPVRKEDPVPGSIYAVFKFFSEPKAWEARALKSYKVRFQDLPSHIVISELKERAARSYIGSRGYVDTGFKALDIYIDILSQMELPKYIHEFLILLRGKVCEVSRLYKKEQVFVILLTVFSELTAIVRHRGNKSTGSMGRMWTLLSDFETLLGKVSYKNPSIIEEQVVPWLTSDPIPRTPDFYSTYFKTAVQFMHRTFVPVTLRSAPPLTFHEYCGRPELWGTTGSGYIGYGKRSFNKWSIYGAYPTEEIYRLALYGDNPPLKPLEKPELTKVRAVISASLQSYILMSYLEYIMADTIVDKAFTTTLMNDRQLENLERHMMTMTGGVRVPVDQSNFDRQPDLVQIGIWQQLLFHLASASAPYRARDSVSLVISRLASTTTFPNLKVRMSDGDKRVLHGLPSGWKWTALLGALINVTQLLTMAELSNTLASLRSTVVQGDDIALSMTDREQATQLVDTYARQGFEVNPKKFWISPDRDEFLRRVATPGIVAGYPARMMIKLLYQLTEPEEPSHYISMLPKLAKVPNVVQEHVKPRSDVPWSETVEELDWREALAILRHRPARTSELVTQWLQLIGRFTAAHPDKRALTLLYRWFVRDLTHATKIKKRNLLVLLQQPGFWGGYSQSLVGLLRTTHLADMIVSELDIGLPGPRATSSRFGTSPTSLAPHYLTLIVPSSVHVQSQKELDLWGLCRSSKYAKHYSNIFRYYKLTLPTLVLWAQRLGDKHVTDFIRSVTLGSEIPKYDPHARLFTSNGVSVGMLIRIRVRHFTHRVLRRETPKCIPVIVGLYREQTLSVPESVRLSEPDKILLSLQRASGYSLNLVKKILQITRKPVDHPVDARFSQAFPNNWSDLARTAGTFLLTVPAEVSGDNADLVPERLGFNHSSWLHAIFRSRKFLLCVVA</sequence>
<comment type="function">
    <text evidence="1">RNA-dependent RNA polymerase which replicates the viral genome. Catalyzes the transcription of fully conservative plus-strand genomic RNAs that are extruded from the virion into the cytoplasm where they function as mRNAs for translation of viral proteins and also as substrates for encapsidation to form new virions. Once encapsidated, the positive strand is converted to dsRNA by the RNA-directed RNA polymerase. Displays ssRNA-binding activity (By similarity).</text>
</comment>
<comment type="catalytic activity">
    <reaction>
        <text>RNA(n) + a ribonucleoside 5'-triphosphate = RNA(n+1) + diphosphate</text>
        <dbReference type="Rhea" id="RHEA:21248"/>
        <dbReference type="Rhea" id="RHEA-COMP:14527"/>
        <dbReference type="Rhea" id="RHEA-COMP:17342"/>
        <dbReference type="ChEBI" id="CHEBI:33019"/>
        <dbReference type="ChEBI" id="CHEBI:61557"/>
        <dbReference type="ChEBI" id="CHEBI:140395"/>
        <dbReference type="EC" id="2.7.7.48"/>
    </reaction>
</comment>
<comment type="alternative products">
    <event type="ribosomal frameshifting"/>
    <isoform>
        <id>Q67653-1</id>
        <name>RNA-directed RNA polymerase</name>
        <name>Pol protein</name>
        <sequence type="displayed"/>
    </isoform>
    <isoform>
        <id>Q67652-1</id>
        <name>Major capsid protein</name>
        <name>Gag protein</name>
        <sequence type="external"/>
    </isoform>
</comment>
<comment type="miscellaneous">
    <text>One molecule or two of Gag capsid protein is replaced in the virion by Gag-Pol because the fusion protein is essential for RNA encapsidation and replication.</text>
</comment>
<comment type="miscellaneous">
    <molecule>Isoform RNA-directed RNA polymerase</molecule>
    <text>Produced by -1 ribosomal frameshifting.</text>
</comment>
<comment type="similarity">
    <text evidence="3">Belongs to the totiviridae RNA-directed RNA polymerase family.</text>
</comment>
<comment type="sequence caution" evidence="3">
    <conflict type="erroneous gene model prediction">
        <sequence resource="EMBL-CDS" id="AAB01579"/>
    </conflict>
</comment>
<accession>Q67653</accession>
<organismHost>
    <name type="scientific">Giardia intestinalis</name>
    <name type="common">Giardia lamblia</name>
    <dbReference type="NCBI Taxonomy" id="5741"/>
</organismHost>
<dbReference type="EC" id="2.7.7.48"/>
<dbReference type="EMBL" id="L13218">
    <property type="protein sequence ID" value="AAB01579.1"/>
    <property type="status" value="ALT_SEQ"/>
    <property type="molecule type" value="Genomic_RNA"/>
</dbReference>
<dbReference type="PIR" id="C47521">
    <property type="entry name" value="C47521"/>
</dbReference>
<dbReference type="SMR" id="Q67653"/>
<dbReference type="Proteomes" id="UP000000350">
    <property type="component" value="Segment"/>
</dbReference>
<dbReference type="GO" id="GO:0016787">
    <property type="term" value="F:hydrolase activity"/>
    <property type="evidence" value="ECO:0007669"/>
    <property type="project" value="UniProtKB-KW"/>
</dbReference>
<dbReference type="GO" id="GO:0000166">
    <property type="term" value="F:nucleotide binding"/>
    <property type="evidence" value="ECO:0007669"/>
    <property type="project" value="UniProtKB-KW"/>
</dbReference>
<dbReference type="GO" id="GO:0003723">
    <property type="term" value="F:RNA binding"/>
    <property type="evidence" value="ECO:0007669"/>
    <property type="project" value="UniProtKB-KW"/>
</dbReference>
<dbReference type="GO" id="GO:0003968">
    <property type="term" value="F:RNA-directed RNA polymerase activity"/>
    <property type="evidence" value="ECO:0007669"/>
    <property type="project" value="UniProtKB-KW"/>
</dbReference>
<dbReference type="GO" id="GO:0006351">
    <property type="term" value="P:DNA-templated transcription"/>
    <property type="evidence" value="ECO:0007669"/>
    <property type="project" value="InterPro"/>
</dbReference>
<dbReference type="GO" id="GO:0075523">
    <property type="term" value="P:viral translational frameshifting"/>
    <property type="evidence" value="ECO:0007669"/>
    <property type="project" value="UniProtKB-KW"/>
</dbReference>
<dbReference type="InterPro" id="IPR043502">
    <property type="entry name" value="DNA/RNA_pol_sf"/>
</dbReference>
<dbReference type="InterPro" id="IPR001795">
    <property type="entry name" value="RNA-dir_pol_luteovirus"/>
</dbReference>
<dbReference type="Pfam" id="PF02123">
    <property type="entry name" value="RdRP_4"/>
    <property type="match status" value="1"/>
</dbReference>
<dbReference type="SUPFAM" id="SSF56672">
    <property type="entry name" value="DNA/RNA polymerases"/>
    <property type="match status" value="1"/>
</dbReference>
<feature type="chain" id="PRO_0000404511" description="Probable RNA-directed RNA polymerase">
    <location>
        <begin position="1"/>
        <end position="1907"/>
    </location>
</feature>
<feature type="region of interest" description="Disordered" evidence="2">
    <location>
        <begin position="42"/>
        <end position="61"/>
    </location>
</feature>
<feature type="compositionally biased region" description="Basic and acidic residues" evidence="2">
    <location>
        <begin position="44"/>
        <end position="56"/>
    </location>
</feature>
<keyword id="KW-0378">Hydrolase</keyword>
<keyword id="KW-0547">Nucleotide-binding</keyword>
<keyword id="KW-0548">Nucleotidyltransferase</keyword>
<keyword id="KW-1185">Reference proteome</keyword>
<keyword id="KW-0688">Ribosomal frameshifting</keyword>
<keyword id="KW-0694">RNA-binding</keyword>
<keyword id="KW-0696">RNA-directed RNA polymerase</keyword>
<keyword id="KW-0808">Transferase</keyword>
<keyword id="KW-0693">Viral RNA replication</keyword>
<organism>
    <name type="scientific">Giardia lamblia virus (isolate Wang)</name>
    <name type="common">GLV</name>
    <dbReference type="NCBI Taxonomy" id="649893"/>
    <lineage>
        <taxon>Viruses</taxon>
        <taxon>Riboviria</taxon>
        <taxon>Orthornavirae</taxon>
        <taxon>Duplornaviricota</taxon>
        <taxon>Chrymotiviricetes</taxon>
        <taxon>Ghabrivirales</taxon>
        <taxon>Totiviridae</taxon>
        <taxon>Giardiavirus</taxon>
        <taxon>Giardia lamblia virus</taxon>
    </lineage>
</organism>
<evidence type="ECO:0000250" key="1"/>
<evidence type="ECO:0000256" key="2">
    <source>
        <dbReference type="SAM" id="MobiDB-lite"/>
    </source>
</evidence>
<evidence type="ECO:0000305" key="3"/>
<name>RDRP_GLVWB</name>
<protein>
    <recommendedName>
        <fullName>Probable RNA-directed RNA polymerase</fullName>
        <ecNumber>2.7.7.48</ecNumber>
    </recommendedName>
    <alternativeName>
        <fullName>Gag-Pol protein</fullName>
    </alternativeName>
</protein>
<reference key="1">
    <citation type="journal article" date="1993" name="Proc. Natl. Acad. Sci. U.S.A.">
        <title>Giardiavirus double-stranded RNA genome encodes a capsid polypeptide and a gag-pol-like fusion protein by a translation frameshift.</title>
        <authorList>
            <person name="Wang A.L."/>
            <person name="Yang H.M."/>
            <person name="Shen K.A."/>
            <person name="Wang C.C."/>
        </authorList>
    </citation>
    <scope>NUCLEOTIDE SEQUENCE [GENOMIC RNA]</scope>
</reference>